<dbReference type="EC" id="1.14.15.29" evidence="1 5"/>
<dbReference type="EMBL" id="AE000516">
    <property type="protein sequence ID" value="AAK48008.1"/>
    <property type="molecule type" value="Genomic_DNA"/>
</dbReference>
<dbReference type="PIR" id="B70677">
    <property type="entry name" value="B70677"/>
</dbReference>
<dbReference type="SMR" id="P9WPP0"/>
<dbReference type="BindingDB" id="P9WPP0"/>
<dbReference type="KEGG" id="mtc:MT3649"/>
<dbReference type="PATRIC" id="fig|83331.31.peg.3930"/>
<dbReference type="HOGENOM" id="CLU_033716_0_0_11"/>
<dbReference type="BRENDA" id="1.14.15.29">
    <property type="organism ID" value="3445"/>
</dbReference>
<dbReference type="UniPathway" id="UPA01058"/>
<dbReference type="Proteomes" id="UP000001020">
    <property type="component" value="Chromosome"/>
</dbReference>
<dbReference type="GO" id="GO:0036199">
    <property type="term" value="F:cholest-4-en-3-one 26-monooxygenase activity"/>
    <property type="evidence" value="ECO:0007669"/>
    <property type="project" value="UniProtKB-EC"/>
</dbReference>
<dbReference type="GO" id="GO:0020037">
    <property type="term" value="F:heme binding"/>
    <property type="evidence" value="ECO:0007669"/>
    <property type="project" value="InterPro"/>
</dbReference>
<dbReference type="GO" id="GO:0005506">
    <property type="term" value="F:iron ion binding"/>
    <property type="evidence" value="ECO:0007669"/>
    <property type="project" value="InterPro"/>
</dbReference>
<dbReference type="GO" id="GO:0008395">
    <property type="term" value="F:steroid hydroxylase activity"/>
    <property type="evidence" value="ECO:0007669"/>
    <property type="project" value="TreeGrafter"/>
</dbReference>
<dbReference type="GO" id="GO:0006707">
    <property type="term" value="P:cholesterol catabolic process"/>
    <property type="evidence" value="ECO:0000315"/>
    <property type="project" value="UniProtKB"/>
</dbReference>
<dbReference type="CDD" id="cd11033">
    <property type="entry name" value="CYP142-like"/>
    <property type="match status" value="1"/>
</dbReference>
<dbReference type="FunFam" id="1.10.630.10:FF:000103">
    <property type="entry name" value="Steroid C26-monooxygenase"/>
    <property type="match status" value="1"/>
</dbReference>
<dbReference type="Gene3D" id="1.10.630.10">
    <property type="entry name" value="Cytochrome P450"/>
    <property type="match status" value="1"/>
</dbReference>
<dbReference type="InterPro" id="IPR001128">
    <property type="entry name" value="Cyt_P450"/>
</dbReference>
<dbReference type="InterPro" id="IPR002397">
    <property type="entry name" value="Cyt_P450_B"/>
</dbReference>
<dbReference type="InterPro" id="IPR036396">
    <property type="entry name" value="Cyt_P450_sf"/>
</dbReference>
<dbReference type="PANTHER" id="PTHR46696:SF4">
    <property type="entry name" value="BIOTIN BIOSYNTHESIS CYTOCHROME P450"/>
    <property type="match status" value="1"/>
</dbReference>
<dbReference type="PANTHER" id="PTHR46696">
    <property type="entry name" value="P450, PUTATIVE (EUROFUNG)-RELATED"/>
    <property type="match status" value="1"/>
</dbReference>
<dbReference type="Pfam" id="PF00067">
    <property type="entry name" value="p450"/>
    <property type="match status" value="1"/>
</dbReference>
<dbReference type="PRINTS" id="PR00359">
    <property type="entry name" value="BP450"/>
</dbReference>
<dbReference type="SUPFAM" id="SSF48264">
    <property type="entry name" value="Cytochrome P450"/>
    <property type="match status" value="1"/>
</dbReference>
<gene>
    <name type="primary">cyp125</name>
    <name evidence="3" type="synonym">cyp125A1</name>
    <name type="ordered locus">MT3649</name>
</gene>
<reference key="1">
    <citation type="journal article" date="2002" name="J. Bacteriol.">
        <title>Whole-genome comparison of Mycobacterium tuberculosis clinical and laboratory strains.</title>
        <authorList>
            <person name="Fleischmann R.D."/>
            <person name="Alland D."/>
            <person name="Eisen J.A."/>
            <person name="Carpenter L."/>
            <person name="White O."/>
            <person name="Peterson J.D."/>
            <person name="DeBoy R.T."/>
            <person name="Dodson R.J."/>
            <person name="Gwinn M.L."/>
            <person name="Haft D.H."/>
            <person name="Hickey E.K."/>
            <person name="Kolonay J.F."/>
            <person name="Nelson W.C."/>
            <person name="Umayam L.A."/>
            <person name="Ermolaeva M.D."/>
            <person name="Salzberg S.L."/>
            <person name="Delcher A."/>
            <person name="Utterback T.R."/>
            <person name="Weidman J.F."/>
            <person name="Khouri H.M."/>
            <person name="Gill J."/>
            <person name="Mikula A."/>
            <person name="Bishai W."/>
            <person name="Jacobs W.R. Jr."/>
            <person name="Venter J.C."/>
            <person name="Fraser C.M."/>
        </authorList>
    </citation>
    <scope>NUCLEOTIDE SEQUENCE [LARGE SCALE GENOMIC DNA]</scope>
    <source>
        <strain>CDC 1551 / Oshkosh</strain>
    </source>
</reference>
<reference key="2">
    <citation type="journal article" date="2010" name="Mol. Microbiol.">
        <title>Mycobacterium tuberculosis CYP125A1, a steroid C27 monooxygenase that detoxifies intracellularly generated cholest-4-en-3-one.</title>
        <authorList>
            <person name="Ouellet H."/>
            <person name="Guan S."/>
            <person name="Johnston J.B."/>
            <person name="Chow E.D."/>
            <person name="Kells P.M."/>
            <person name="Burlingame A.L."/>
            <person name="Cox J.S."/>
            <person name="Podust L.M."/>
            <person name="de Montellano P.R."/>
        </authorList>
    </citation>
    <scope>FUNCTION IN CHOLESTEROL CATABOLISM</scope>
    <scope>CATALYTIC ACTIVITY</scope>
    <scope>COFACTOR</scope>
    <scope>DISRUPTION PHENOTYPE</scope>
    <scope>SUBSTRATE SPECIFICITY</scope>
    <scope>PATHWAY</scope>
    <source>
        <strain>CDC 1551 / Oshkosh</strain>
    </source>
</reference>
<accession>P9WPP0</accession>
<accession>L0TEH2</accession>
<accession>P63709</accession>
<accession>P71856</accession>
<comment type="function">
    <text evidence="2">Involved in the utilization of cholesterol as the sole carbon and energy source by degrading the side chain during infection. Primarily catalyzes the sequential oxidation of the terminal methyl of cholest-4-en-3-one into (25S)-26-hydroxycholest-4-en-3-one (alcohol), (25S)-26-oxocholest-4-en-3-one (aldehyde), to finally yield the carboxylic acid (25S)-3-oxocholest-4-en-26-oate. Also able to sequentially oxidize cholesterol itself, not only cholest-4-en-3-one.</text>
</comment>
<comment type="catalytic activity">
    <reaction evidence="1 5">
        <text>cholest-4-en-3-one + 6 reduced [2Fe-2S]-[ferredoxin] + 3 O2 + 5 H(+) = (25S)-3-oxocholest-4-en-26-oate + 6 oxidized [2Fe-2S]-[ferredoxin] + 4 H2O</text>
        <dbReference type="Rhea" id="RHEA:51564"/>
        <dbReference type="Rhea" id="RHEA-COMP:10000"/>
        <dbReference type="Rhea" id="RHEA-COMP:10001"/>
        <dbReference type="ChEBI" id="CHEBI:15377"/>
        <dbReference type="ChEBI" id="CHEBI:15378"/>
        <dbReference type="ChEBI" id="CHEBI:15379"/>
        <dbReference type="ChEBI" id="CHEBI:16175"/>
        <dbReference type="ChEBI" id="CHEBI:33737"/>
        <dbReference type="ChEBI" id="CHEBI:33738"/>
        <dbReference type="ChEBI" id="CHEBI:71541"/>
        <dbReference type="EC" id="1.14.15.29"/>
    </reaction>
</comment>
<comment type="cofactor">
    <cofactor evidence="2">
        <name>heme</name>
        <dbReference type="ChEBI" id="CHEBI:30413"/>
    </cofactor>
</comment>
<comment type="pathway">
    <text evidence="5">Steroid metabolism; cholesterol degradation.</text>
</comment>
<comment type="induction">
    <text evidence="1">By cholesterol.</text>
</comment>
<comment type="disruption phenotype">
    <text evidence="2">Cells lacking this gene fail to grow in the presence of cholesterol.</text>
</comment>
<comment type="similarity">
    <text evidence="4">Belongs to the cytochrome P450 family.</text>
</comment>
<name>CP125_MYCTO</name>
<proteinExistence type="evidence at protein level"/>
<sequence length="433" mass="48433">MSWNHQSVEIAVRRTTVPSPNLPPGFDFTDPAIYAERLPVAEFAELRSAAPIWWNGQDPGKGGGFHDGGFWAITKLNDVKEISRHSDVFSSYENGVIPRFKNDIAREDIEVQRFVMLNMDAPHHTRLRKIISRGFTPRAVGRLHDELQERAQKIAAEAAAAGSGDFVEQVSCELPLQAIAGLLGVPQEDRGKLFHWSNEMTGNEDPEYAHIDPKASSAELIGYAMKMAEEKAKNPADDIVTQLIQADIDGEKLSDDEFGFFVVMLAVAGNETTRNSITQGMMAFAEHPDQWELYKKVRPETAADEIVRWATPVTAFQRTALRDYELSGVQIKKGQRVVMFYRSANFDEEVFQDPFTFNILRNPNPHVGFGGTGAHYCIGANLARMTINLIFNAVADHMPDLKPISAPERLRSGWLNGIKHWQVDYTGRCPVAH</sequence>
<evidence type="ECO:0000250" key="1">
    <source>
        <dbReference type="UniProtKB" id="P9WPP1"/>
    </source>
</evidence>
<evidence type="ECO:0000269" key="2">
    <source>
    </source>
</evidence>
<evidence type="ECO:0000303" key="3">
    <source>
    </source>
</evidence>
<evidence type="ECO:0000305" key="4"/>
<evidence type="ECO:0000305" key="5">
    <source>
    </source>
</evidence>
<organism>
    <name type="scientific">Mycobacterium tuberculosis (strain CDC 1551 / Oshkosh)</name>
    <dbReference type="NCBI Taxonomy" id="83331"/>
    <lineage>
        <taxon>Bacteria</taxon>
        <taxon>Bacillati</taxon>
        <taxon>Actinomycetota</taxon>
        <taxon>Actinomycetes</taxon>
        <taxon>Mycobacteriales</taxon>
        <taxon>Mycobacteriaceae</taxon>
        <taxon>Mycobacterium</taxon>
        <taxon>Mycobacterium tuberculosis complex</taxon>
    </lineage>
</organism>
<feature type="chain" id="PRO_0000426918" description="Steroid C26-monooxygenase">
    <location>
        <begin position="1"/>
        <end position="433"/>
    </location>
</feature>
<feature type="binding site" evidence="1">
    <location>
        <position position="202"/>
    </location>
    <ligand>
        <name>substrate</name>
    </ligand>
</feature>
<feature type="binding site" description="axial binding residue" evidence="1">
    <location>
        <position position="377"/>
    </location>
    <ligand>
        <name>heme</name>
        <dbReference type="ChEBI" id="CHEBI:30413"/>
    </ligand>
    <ligandPart>
        <name>Fe</name>
        <dbReference type="ChEBI" id="CHEBI:18248"/>
    </ligandPart>
</feature>
<keyword id="KW-0153">Cholesterol metabolism</keyword>
<keyword id="KW-0349">Heme</keyword>
<keyword id="KW-0408">Iron</keyword>
<keyword id="KW-0442">Lipid degradation</keyword>
<keyword id="KW-0443">Lipid metabolism</keyword>
<keyword id="KW-0479">Metal-binding</keyword>
<keyword id="KW-0503">Monooxygenase</keyword>
<keyword id="KW-0520">NAD</keyword>
<keyword id="KW-0560">Oxidoreductase</keyword>
<keyword id="KW-1185">Reference proteome</keyword>
<keyword id="KW-0753">Steroid metabolism</keyword>
<keyword id="KW-1207">Sterol metabolism</keyword>
<keyword id="KW-0843">Virulence</keyword>
<protein>
    <recommendedName>
        <fullName evidence="3">Steroid C26-monooxygenase</fullName>
        <ecNumber evidence="1 5">1.14.15.29</ecNumber>
    </recommendedName>
    <alternativeName>
        <fullName evidence="3">Cholest-4-en-3-one 26-monooxygenase</fullName>
    </alternativeName>
    <alternativeName>
        <fullName evidence="1 5">Cholest-4-en-3-one C26-monooxygenase [(25S)-3-oxocholest-4-en-26-oate forming]</fullName>
    </alternativeName>
    <alternativeName>
        <fullName evidence="3">Cholesterol C26-monooxygenase</fullName>
    </alternativeName>
    <alternativeName>
        <fullName evidence="1 5">Cholesterol C26-monooxygenase [(25S)-3beta-hydroxycholest-5-en-26-oate forming]</fullName>
    </alternativeName>
    <alternativeName>
        <fullName evidence="3">Cytochrome P450 125</fullName>
    </alternativeName>
    <alternativeName>
        <fullName evidence="3">Steroid C27-monooxygenase</fullName>
    </alternativeName>
</protein>